<dbReference type="EC" id="3.1.1.74" evidence="8"/>
<dbReference type="EC" id="3.1.1.101" evidence="6"/>
<dbReference type="EMBL" id="AB445476">
    <property type="protein sequence ID" value="BAI99230.2"/>
    <property type="molecule type" value="Genomic_DNA"/>
</dbReference>
<dbReference type="SMR" id="D4Q9N1"/>
<dbReference type="ESTHER" id="9acto-d4q9n1">
    <property type="family name" value="Polyesterase-lipase-cutinase"/>
</dbReference>
<dbReference type="BRENDA" id="3.1.1.74">
    <property type="organism ID" value="6312"/>
</dbReference>
<dbReference type="GO" id="GO:0005576">
    <property type="term" value="C:extracellular region"/>
    <property type="evidence" value="ECO:0007669"/>
    <property type="project" value="UniProtKB-SubCell"/>
</dbReference>
<dbReference type="GO" id="GO:0042597">
    <property type="term" value="C:periplasmic space"/>
    <property type="evidence" value="ECO:0007669"/>
    <property type="project" value="UniProtKB-SubCell"/>
</dbReference>
<dbReference type="GO" id="GO:0050525">
    <property type="term" value="F:cutinase activity"/>
    <property type="evidence" value="ECO:0007669"/>
    <property type="project" value="UniProtKB-ARBA"/>
</dbReference>
<dbReference type="Gene3D" id="3.40.50.1820">
    <property type="entry name" value="alpha/beta hydrolase"/>
    <property type="match status" value="1"/>
</dbReference>
<dbReference type="InterPro" id="IPR029058">
    <property type="entry name" value="AB_hydrolase_fold"/>
</dbReference>
<dbReference type="InterPro" id="IPR050261">
    <property type="entry name" value="FrsA_esterase"/>
</dbReference>
<dbReference type="InterPro" id="IPR041127">
    <property type="entry name" value="PET_hydrolase/cutinase-like"/>
</dbReference>
<dbReference type="PANTHER" id="PTHR22946">
    <property type="entry name" value="DIENELACTONE HYDROLASE DOMAIN-CONTAINING PROTEIN-RELATED"/>
    <property type="match status" value="1"/>
</dbReference>
<dbReference type="PANTHER" id="PTHR22946:SF9">
    <property type="entry name" value="POLYKETIDE TRANSFERASE AF380"/>
    <property type="match status" value="1"/>
</dbReference>
<dbReference type="Pfam" id="PF12740">
    <property type="entry name" value="PETase"/>
    <property type="match status" value="1"/>
</dbReference>
<dbReference type="SUPFAM" id="SSF53474">
    <property type="entry name" value="alpha/beta-Hydrolases"/>
    <property type="match status" value="1"/>
</dbReference>
<accession>D4Q9N1</accession>
<name>PETH1_THEAE</name>
<reference evidence="10" key="1">
    <citation type="journal article" date="2010" name="Appl. Microbiol. Biotechnol.">
        <title>Diversity of polyester-degrading bacteria in compost and molecular analysis of a thermoactive esterase from Thermobifida alba AHK119.</title>
        <authorList>
            <person name="Hu X."/>
            <person name="Thumarat U."/>
            <person name="Zhang X."/>
            <person name="Tang M."/>
            <person name="Kawai F."/>
        </authorList>
    </citation>
    <scope>NUCLEOTIDE SEQUENCE [GENOMIC DNA]</scope>
</reference>
<reference evidence="8" key="2">
    <citation type="journal article" date="2015" name="J. Biosci. Bioeng.">
        <title>Comparison of genetic structures and biochemical properties of tandem cutinase-type polyesterases from Thermobifida alba AHK119.</title>
        <authorList>
            <person name="Thumarat U."/>
            <person name="Kawabata T."/>
            <person name="Nakajima M."/>
            <person name="Nakajima H."/>
            <person name="Sugiyama A."/>
            <person name="Yazaki K."/>
            <person name="Tada T."/>
            <person name="Waku T."/>
            <person name="Tanaka N."/>
            <person name="Kawai F."/>
        </authorList>
    </citation>
    <scope>FUNCTION</scope>
    <scope>CATALYTIC ACTIVITY</scope>
    <scope>BIOPHYSICOCHEMICAL PROPERTIES</scope>
    <scope>INDUCTION</scope>
    <scope>BIOTECHNOLOGY</scope>
    <scope>MUTAGENESIS OF ALA-64 AND THR-249</scope>
</reference>
<gene>
    <name evidence="7" type="primary">est1</name>
</gene>
<keyword id="KW-1015">Disulfide bond</keyword>
<keyword id="KW-0378">Hydrolase</keyword>
<keyword id="KW-0574">Periplasm</keyword>
<keyword id="KW-0964">Secreted</keyword>
<keyword id="KW-0719">Serine esterase</keyword>
<keyword id="KW-0732">Signal</keyword>
<sequence length="296" mass="31787">MSVTTPRREASLLSRAVAVAAAAAATVALAAPAQAANPYERGPNPTESMLEARSGPFSVSEERASRLGADGFGGGTIYYPRENNTYGAIAISPGYTGTQSSIAWLGERIASHGFVVIAIDTNTTLDQPDSRARQLNAALDYMLTDASSSVRNRIDASRLAVMGHSMGGGGTLRLASQRPDLKAAIPLTPWHLNKSWRDITVPTLIIGADLDTIAPVSSHSEPFYNSIPSSTDKAYLELNNATHFAPNITNKTIGMYSVAWLKRFVDEDTRYTQFLCPGPRTGLLSDVDEYRSTCPF</sequence>
<protein>
    <recommendedName>
        <fullName evidence="7">Cutinase est1</fullName>
        <ecNumber evidence="8">3.1.1.74</ecNumber>
    </recommendedName>
    <alternativeName>
        <fullName evidence="8">Poly(ethylene terephthalate) hydrolase</fullName>
        <shortName evidence="8">PET hydrolase</shortName>
        <shortName evidence="8">PETase</shortName>
        <ecNumber evidence="6">3.1.1.101</ecNumber>
    </alternativeName>
</protein>
<comment type="function">
    <text evidence="6">Catalyzes the hydrolysis of cutin, a polyester that forms the structure of plant cuticle (PubMed:25910960). Shows esterase activity towards p-nitrophenol-linked aliphatic esters (pNP-aliphatic esters) (PubMed:25910960). Capable of degrading the plastic poly(ethylene terephthalate) (PET), the most abundant polyester plastic in the world (PubMed:25910960). Can also depolymerize the synthetic polyester poly(epsilon-caprolactone) (PCL) (PubMed:25910960).</text>
</comment>
<comment type="catalytic activity">
    <reaction evidence="9">
        <text>(ethylene terephthalate)(n) + H2O = (ethylene terephthalate)(n-1) + 4-[(2-hydroxyethoxy)carbonyl]benzoate + H(+)</text>
        <dbReference type="Rhea" id="RHEA:49528"/>
        <dbReference type="Rhea" id="RHEA-COMP:12420"/>
        <dbReference type="Rhea" id="RHEA-COMP:12421"/>
        <dbReference type="ChEBI" id="CHEBI:15377"/>
        <dbReference type="ChEBI" id="CHEBI:15378"/>
        <dbReference type="ChEBI" id="CHEBI:131701"/>
        <dbReference type="ChEBI" id="CHEBI:131704"/>
        <dbReference type="EC" id="3.1.1.101"/>
    </reaction>
    <physiologicalReaction direction="left-to-right" evidence="9">
        <dbReference type="Rhea" id="RHEA:49529"/>
    </physiologicalReaction>
</comment>
<comment type="catalytic activity">
    <reaction evidence="6">
        <text>a butanoate ester + H2O = an aliphatic alcohol + butanoate + H(+)</text>
        <dbReference type="Rhea" id="RHEA:47348"/>
        <dbReference type="ChEBI" id="CHEBI:2571"/>
        <dbReference type="ChEBI" id="CHEBI:15377"/>
        <dbReference type="ChEBI" id="CHEBI:15378"/>
        <dbReference type="ChEBI" id="CHEBI:17968"/>
        <dbReference type="ChEBI" id="CHEBI:50477"/>
    </reaction>
    <physiologicalReaction direction="left-to-right" evidence="6">
        <dbReference type="Rhea" id="RHEA:47349"/>
    </physiologicalReaction>
</comment>
<comment type="catalytic activity">
    <reaction evidence="9">
        <text>cutin + H2O = cutin monomers.</text>
        <dbReference type="EC" id="3.1.1.74"/>
    </reaction>
</comment>
<comment type="biophysicochemical properties">
    <phDependence>
        <text evidence="6">Optimum pH is 6.</text>
    </phDependence>
    <temperatureDependence>
        <text evidence="6">Optimum temperature is 50 degrees Celsius.</text>
    </temperatureDependence>
</comment>
<comment type="subunit">
    <text evidence="2">Monomer.</text>
</comment>
<comment type="subcellular location">
    <subcellularLocation>
        <location evidence="3">Secreted</location>
    </subcellularLocation>
    <subcellularLocation>
        <location evidence="3">Periplasm</location>
    </subcellularLocation>
</comment>
<comment type="induction">
    <text evidence="6">Expression is not induced by the synthetic polyester poly(butylene succinate-co-adipate) (PBSA).</text>
</comment>
<comment type="biotechnology">
    <text evidence="6">Has potential for application in biological recycling of plastic waste products.</text>
</comment>
<comment type="similarity">
    <text evidence="8">Belongs to the AB hydrolase superfamily.</text>
</comment>
<feature type="signal peptide" evidence="4">
    <location>
        <begin position="1"/>
        <end position="35"/>
    </location>
</feature>
<feature type="chain" id="PRO_5003062113" description="Cutinase est1" evidence="4">
    <location>
        <begin position="36"/>
        <end position="296"/>
    </location>
</feature>
<feature type="region of interest" description="Disordered" evidence="5">
    <location>
        <begin position="36"/>
        <end position="57"/>
    </location>
</feature>
<feature type="active site" description="Nucleophile" evidence="1">
    <location>
        <position position="165"/>
    </location>
</feature>
<feature type="active site" description="Charge relay system" evidence="1">
    <location>
        <position position="211"/>
    </location>
</feature>
<feature type="active site" description="Charge relay system" evidence="1">
    <location>
        <position position="243"/>
    </location>
</feature>
<feature type="binding site" evidence="1">
    <location>
        <position position="95"/>
    </location>
    <ligand>
        <name>poly(ethylene terephthalate)</name>
        <dbReference type="ChEBI" id="CHEBI:131701"/>
    </ligand>
</feature>
<feature type="binding site" evidence="1">
    <location>
        <position position="166"/>
    </location>
    <ligand>
        <name>poly(ethylene terephthalate)</name>
        <dbReference type="ChEBI" id="CHEBI:131701"/>
    </ligand>
</feature>
<feature type="binding site" evidence="1">
    <location>
        <position position="190"/>
    </location>
    <ligand>
        <name>poly(ethylene terephthalate)</name>
        <dbReference type="ChEBI" id="CHEBI:131701"/>
    </ligand>
</feature>
<feature type="disulfide bond" evidence="2">
    <location>
        <begin position="276"/>
        <end position="294"/>
    </location>
</feature>
<feature type="mutagenesis site" description="Increases thermostability and activity on pNP-butyrate; when associated with P-249." evidence="6">
    <original>A</original>
    <variation>V</variation>
    <location>
        <position position="64"/>
    </location>
</feature>
<feature type="mutagenesis site" description="Increases thermostability and activity on pNP-butyrate; when associated with V-64." evidence="6">
    <original>T</original>
    <variation>P</variation>
    <location>
        <position position="249"/>
    </location>
</feature>
<evidence type="ECO:0000250" key="1">
    <source>
        <dbReference type="UniProtKB" id="A0A0K8P6T7"/>
    </source>
</evidence>
<evidence type="ECO:0000250" key="2">
    <source>
        <dbReference type="UniProtKB" id="F7IX06"/>
    </source>
</evidence>
<evidence type="ECO:0000250" key="3">
    <source>
        <dbReference type="UniProtKB" id="G8GER6"/>
    </source>
</evidence>
<evidence type="ECO:0000255" key="4"/>
<evidence type="ECO:0000256" key="5">
    <source>
        <dbReference type="SAM" id="MobiDB-lite"/>
    </source>
</evidence>
<evidence type="ECO:0000269" key="6">
    <source>
    </source>
</evidence>
<evidence type="ECO:0000303" key="7">
    <source>
    </source>
</evidence>
<evidence type="ECO:0000305" key="8"/>
<evidence type="ECO:0000305" key="9">
    <source>
    </source>
</evidence>
<evidence type="ECO:0000312" key="10">
    <source>
        <dbReference type="EMBL" id="BAI99230.2"/>
    </source>
</evidence>
<organism>
    <name type="scientific">Thermobifida alba</name>
    <name type="common">Thermomonospora alba</name>
    <dbReference type="NCBI Taxonomy" id="53522"/>
    <lineage>
        <taxon>Bacteria</taxon>
        <taxon>Bacillati</taxon>
        <taxon>Actinomycetota</taxon>
        <taxon>Actinomycetes</taxon>
        <taxon>Streptosporangiales</taxon>
        <taxon>Nocardiopsidaceae</taxon>
        <taxon>Thermobifida</taxon>
    </lineage>
</organism>
<proteinExistence type="evidence at protein level"/>